<accession>B4TQD8</accession>
<dbReference type="EC" id="2.7.1.2" evidence="1"/>
<dbReference type="EMBL" id="CP001127">
    <property type="protein sequence ID" value="ACF92510.1"/>
    <property type="molecule type" value="Genomic_DNA"/>
</dbReference>
<dbReference type="RefSeq" id="WP_000170372.1">
    <property type="nucleotide sequence ID" value="NC_011094.1"/>
</dbReference>
<dbReference type="SMR" id="B4TQD8"/>
<dbReference type="KEGG" id="sew:SeSA_A2636"/>
<dbReference type="HOGENOM" id="CLU_042582_1_0_6"/>
<dbReference type="Proteomes" id="UP000001865">
    <property type="component" value="Chromosome"/>
</dbReference>
<dbReference type="GO" id="GO:0005829">
    <property type="term" value="C:cytosol"/>
    <property type="evidence" value="ECO:0007669"/>
    <property type="project" value="TreeGrafter"/>
</dbReference>
<dbReference type="GO" id="GO:0005524">
    <property type="term" value="F:ATP binding"/>
    <property type="evidence" value="ECO:0007669"/>
    <property type="project" value="UniProtKB-UniRule"/>
</dbReference>
<dbReference type="GO" id="GO:0005536">
    <property type="term" value="F:D-glucose binding"/>
    <property type="evidence" value="ECO:0007669"/>
    <property type="project" value="InterPro"/>
</dbReference>
<dbReference type="GO" id="GO:0004340">
    <property type="term" value="F:glucokinase activity"/>
    <property type="evidence" value="ECO:0007669"/>
    <property type="project" value="UniProtKB-UniRule"/>
</dbReference>
<dbReference type="GO" id="GO:0006096">
    <property type="term" value="P:glycolytic process"/>
    <property type="evidence" value="ECO:0007669"/>
    <property type="project" value="UniProtKB-UniRule"/>
</dbReference>
<dbReference type="CDD" id="cd24008">
    <property type="entry name" value="ASKHA_NBD_GLK"/>
    <property type="match status" value="1"/>
</dbReference>
<dbReference type="FunFam" id="3.30.420.40:FF:000045">
    <property type="entry name" value="Glucokinase"/>
    <property type="match status" value="1"/>
</dbReference>
<dbReference type="FunFam" id="3.40.367.20:FF:000002">
    <property type="entry name" value="Glucokinase"/>
    <property type="match status" value="1"/>
</dbReference>
<dbReference type="Gene3D" id="3.30.420.40">
    <property type="match status" value="1"/>
</dbReference>
<dbReference type="Gene3D" id="3.40.367.20">
    <property type="match status" value="1"/>
</dbReference>
<dbReference type="HAMAP" id="MF_00524">
    <property type="entry name" value="Glucokinase"/>
    <property type="match status" value="1"/>
</dbReference>
<dbReference type="InterPro" id="IPR043129">
    <property type="entry name" value="ATPase_NBD"/>
</dbReference>
<dbReference type="InterPro" id="IPR050201">
    <property type="entry name" value="Bacterial_glucokinase"/>
</dbReference>
<dbReference type="InterPro" id="IPR003836">
    <property type="entry name" value="Glucokinase"/>
</dbReference>
<dbReference type="NCBIfam" id="TIGR00749">
    <property type="entry name" value="glk"/>
    <property type="match status" value="1"/>
</dbReference>
<dbReference type="NCBIfam" id="NF001414">
    <property type="entry name" value="PRK00292.1-1"/>
    <property type="match status" value="1"/>
</dbReference>
<dbReference type="NCBIfam" id="NF001416">
    <property type="entry name" value="PRK00292.1-3"/>
    <property type="match status" value="1"/>
</dbReference>
<dbReference type="PANTHER" id="PTHR47690">
    <property type="entry name" value="GLUCOKINASE"/>
    <property type="match status" value="1"/>
</dbReference>
<dbReference type="PANTHER" id="PTHR47690:SF1">
    <property type="entry name" value="GLUCOKINASE"/>
    <property type="match status" value="1"/>
</dbReference>
<dbReference type="Pfam" id="PF02685">
    <property type="entry name" value="Glucokinase"/>
    <property type="match status" value="1"/>
</dbReference>
<dbReference type="SUPFAM" id="SSF53067">
    <property type="entry name" value="Actin-like ATPase domain"/>
    <property type="match status" value="1"/>
</dbReference>
<name>GLK_SALSV</name>
<keyword id="KW-0067">ATP-binding</keyword>
<keyword id="KW-0963">Cytoplasm</keyword>
<keyword id="KW-0324">Glycolysis</keyword>
<keyword id="KW-0418">Kinase</keyword>
<keyword id="KW-0547">Nucleotide-binding</keyword>
<keyword id="KW-0808">Transferase</keyword>
<organism>
    <name type="scientific">Salmonella schwarzengrund (strain CVM19633)</name>
    <dbReference type="NCBI Taxonomy" id="439843"/>
    <lineage>
        <taxon>Bacteria</taxon>
        <taxon>Pseudomonadati</taxon>
        <taxon>Pseudomonadota</taxon>
        <taxon>Gammaproteobacteria</taxon>
        <taxon>Enterobacterales</taxon>
        <taxon>Enterobacteriaceae</taxon>
        <taxon>Salmonella</taxon>
    </lineage>
</organism>
<sequence>MTKYALVGDVGGTNARLALCDIASGEISQAKTYSGLDYPSLEAVVRVYLDEHSVNVEDGCIAIACPITGDWVAMTNHTWAFSIAEMKKNLGFSHLEIINDFTAVSMAIPMLKKEHLIQFGGGEPVDGKPIAVYGAGTGLGVAHLVHVDKRWISLPGEGGHVDFAPNSEEEAMILEILRAEIGHVSAERVLSGPGLVNLYRAIVKSDNRLPENLRPKDITERALADSCIDCRRALSLFCVIMGRFGGDLALTMGTFGGVYIAGGIVPRFLEFFKASGFRGGFEDKGRFKDYVHGIPVYLIVHDNPGLLGSGAHLRQTLGHIL</sequence>
<reference key="1">
    <citation type="journal article" date="2011" name="J. Bacteriol.">
        <title>Comparative genomics of 28 Salmonella enterica isolates: evidence for CRISPR-mediated adaptive sublineage evolution.</title>
        <authorList>
            <person name="Fricke W.F."/>
            <person name="Mammel M.K."/>
            <person name="McDermott P.F."/>
            <person name="Tartera C."/>
            <person name="White D.G."/>
            <person name="Leclerc J.E."/>
            <person name="Ravel J."/>
            <person name="Cebula T.A."/>
        </authorList>
    </citation>
    <scope>NUCLEOTIDE SEQUENCE [LARGE SCALE GENOMIC DNA]</scope>
    <source>
        <strain>CVM19633</strain>
    </source>
</reference>
<feature type="chain" id="PRO_1000127724" description="Glucokinase">
    <location>
        <begin position="1"/>
        <end position="321"/>
    </location>
</feature>
<feature type="binding site" evidence="1">
    <location>
        <begin position="8"/>
        <end position="13"/>
    </location>
    <ligand>
        <name>ATP</name>
        <dbReference type="ChEBI" id="CHEBI:30616"/>
    </ligand>
</feature>
<comment type="catalytic activity">
    <reaction evidence="1">
        <text>D-glucose + ATP = D-glucose 6-phosphate + ADP + H(+)</text>
        <dbReference type="Rhea" id="RHEA:17825"/>
        <dbReference type="ChEBI" id="CHEBI:4167"/>
        <dbReference type="ChEBI" id="CHEBI:15378"/>
        <dbReference type="ChEBI" id="CHEBI:30616"/>
        <dbReference type="ChEBI" id="CHEBI:61548"/>
        <dbReference type="ChEBI" id="CHEBI:456216"/>
        <dbReference type="EC" id="2.7.1.2"/>
    </reaction>
</comment>
<comment type="subcellular location">
    <subcellularLocation>
        <location evidence="1">Cytoplasm</location>
    </subcellularLocation>
</comment>
<comment type="similarity">
    <text evidence="1">Belongs to the bacterial glucokinase family.</text>
</comment>
<proteinExistence type="inferred from homology"/>
<evidence type="ECO:0000255" key="1">
    <source>
        <dbReference type="HAMAP-Rule" id="MF_00524"/>
    </source>
</evidence>
<protein>
    <recommendedName>
        <fullName evidence="1">Glucokinase</fullName>
        <ecNumber evidence="1">2.7.1.2</ecNumber>
    </recommendedName>
    <alternativeName>
        <fullName evidence="1">Glucose kinase</fullName>
    </alternativeName>
</protein>
<gene>
    <name evidence="1" type="primary">glk</name>
    <name type="ordered locus">SeSA_A2636</name>
</gene>